<dbReference type="EC" id="2.7.7.89" evidence="1"/>
<dbReference type="EC" id="2.7.7.42" evidence="1"/>
<dbReference type="EMBL" id="CP000250">
    <property type="protein sequence ID" value="ABD08136.1"/>
    <property type="molecule type" value="Genomic_DNA"/>
</dbReference>
<dbReference type="RefSeq" id="WP_011442320.1">
    <property type="nucleotide sequence ID" value="NC_007778.1"/>
</dbReference>
<dbReference type="SMR" id="Q2IUH4"/>
<dbReference type="STRING" id="316058.RPB_3440"/>
<dbReference type="KEGG" id="rpb:RPB_3440"/>
<dbReference type="eggNOG" id="COG1391">
    <property type="taxonomic scope" value="Bacteria"/>
</dbReference>
<dbReference type="HOGENOM" id="CLU_006233_0_0_5"/>
<dbReference type="OrthoDB" id="9759366at2"/>
<dbReference type="Proteomes" id="UP000008809">
    <property type="component" value="Chromosome"/>
</dbReference>
<dbReference type="GO" id="GO:0005829">
    <property type="term" value="C:cytosol"/>
    <property type="evidence" value="ECO:0007669"/>
    <property type="project" value="TreeGrafter"/>
</dbReference>
<dbReference type="GO" id="GO:0008882">
    <property type="term" value="F:[glutamate-ammonia-ligase] adenylyltransferase activity"/>
    <property type="evidence" value="ECO:0007669"/>
    <property type="project" value="UniProtKB-UniRule"/>
</dbReference>
<dbReference type="GO" id="GO:0047388">
    <property type="term" value="F:[glutamine synthetase]-adenylyl-L-tyrosine phosphorylase activity"/>
    <property type="evidence" value="ECO:0007669"/>
    <property type="project" value="UniProtKB-EC"/>
</dbReference>
<dbReference type="GO" id="GO:0005524">
    <property type="term" value="F:ATP binding"/>
    <property type="evidence" value="ECO:0007669"/>
    <property type="project" value="UniProtKB-UniRule"/>
</dbReference>
<dbReference type="GO" id="GO:0000287">
    <property type="term" value="F:magnesium ion binding"/>
    <property type="evidence" value="ECO:0007669"/>
    <property type="project" value="UniProtKB-UniRule"/>
</dbReference>
<dbReference type="GO" id="GO:0000820">
    <property type="term" value="P:regulation of glutamine family amino acid metabolic process"/>
    <property type="evidence" value="ECO:0007669"/>
    <property type="project" value="UniProtKB-UniRule"/>
</dbReference>
<dbReference type="CDD" id="cd05401">
    <property type="entry name" value="NT_GlnE_GlnD_like"/>
    <property type="match status" value="2"/>
</dbReference>
<dbReference type="FunFam" id="1.20.120.330:FF:000028">
    <property type="entry name" value="Bifunctional glutamine synthetase adenylyltransferase/adenylyl-removing enzyme"/>
    <property type="match status" value="1"/>
</dbReference>
<dbReference type="FunFam" id="3.30.460.10:FF:000081">
    <property type="entry name" value="Bifunctional glutamine synthetase adenylyltransferase/adenylyl-removing enzyme"/>
    <property type="match status" value="1"/>
</dbReference>
<dbReference type="Gene3D" id="1.20.120.1510">
    <property type="match status" value="1"/>
</dbReference>
<dbReference type="Gene3D" id="3.30.460.10">
    <property type="entry name" value="Beta Polymerase, domain 2"/>
    <property type="match status" value="2"/>
</dbReference>
<dbReference type="Gene3D" id="1.20.120.330">
    <property type="entry name" value="Nucleotidyltransferases domain 2"/>
    <property type="match status" value="2"/>
</dbReference>
<dbReference type="HAMAP" id="MF_00802">
    <property type="entry name" value="GlnE"/>
    <property type="match status" value="1"/>
</dbReference>
<dbReference type="InterPro" id="IPR023057">
    <property type="entry name" value="GlnE"/>
</dbReference>
<dbReference type="InterPro" id="IPR005190">
    <property type="entry name" value="GlnE_rpt_dom"/>
</dbReference>
<dbReference type="InterPro" id="IPR043519">
    <property type="entry name" value="NT_sf"/>
</dbReference>
<dbReference type="InterPro" id="IPR013546">
    <property type="entry name" value="PII_UdlTrfase/GS_AdlTrfase"/>
</dbReference>
<dbReference type="NCBIfam" id="NF008292">
    <property type="entry name" value="PRK11072.1"/>
    <property type="match status" value="1"/>
</dbReference>
<dbReference type="NCBIfam" id="NF010706">
    <property type="entry name" value="PRK14108.1"/>
    <property type="match status" value="1"/>
</dbReference>
<dbReference type="PANTHER" id="PTHR30621:SF0">
    <property type="entry name" value="BIFUNCTIONAL GLUTAMINE SYNTHETASE ADENYLYLTRANSFERASE_ADENYLYL-REMOVING ENZYME"/>
    <property type="match status" value="1"/>
</dbReference>
<dbReference type="PANTHER" id="PTHR30621">
    <property type="entry name" value="GLUTAMINE SYNTHETASE ADENYLYLTRANSFERASE"/>
    <property type="match status" value="1"/>
</dbReference>
<dbReference type="Pfam" id="PF08335">
    <property type="entry name" value="GlnD_UR_UTase"/>
    <property type="match status" value="2"/>
</dbReference>
<dbReference type="Pfam" id="PF03710">
    <property type="entry name" value="GlnE"/>
    <property type="match status" value="2"/>
</dbReference>
<dbReference type="SUPFAM" id="SSF81301">
    <property type="entry name" value="Nucleotidyltransferase"/>
    <property type="match status" value="2"/>
</dbReference>
<dbReference type="SUPFAM" id="SSF81593">
    <property type="entry name" value="Nucleotidyltransferase substrate binding subunit/domain"/>
    <property type="match status" value="2"/>
</dbReference>
<evidence type="ECO:0000255" key="1">
    <source>
        <dbReference type="HAMAP-Rule" id="MF_00802"/>
    </source>
</evidence>
<protein>
    <recommendedName>
        <fullName evidence="1">Bifunctional glutamine synthetase adenylyltransferase/adenylyl-removing enzyme</fullName>
    </recommendedName>
    <alternativeName>
        <fullName evidence="1">ATP:glutamine synthetase adenylyltransferase</fullName>
    </alternativeName>
    <alternativeName>
        <fullName evidence="1">ATase</fullName>
    </alternativeName>
    <domain>
        <recommendedName>
            <fullName evidence="1">Glutamine synthetase adenylyl-L-tyrosine phosphorylase</fullName>
            <ecNumber evidence="1">2.7.7.89</ecNumber>
        </recommendedName>
        <alternativeName>
            <fullName evidence="1">Adenylyl removase</fullName>
            <shortName evidence="1">AR</shortName>
            <shortName evidence="1">AT-N</shortName>
        </alternativeName>
    </domain>
    <domain>
        <recommendedName>
            <fullName evidence="1">Glutamine synthetase adenylyl transferase</fullName>
            <ecNumber evidence="1">2.7.7.42</ecNumber>
        </recommendedName>
        <alternativeName>
            <fullName evidence="1">Adenylyl transferase</fullName>
            <shortName evidence="1">AT</shortName>
            <shortName evidence="1">AT-C</shortName>
        </alternativeName>
    </domain>
</protein>
<accession>Q2IUH4</accession>
<organism>
    <name type="scientific">Rhodopseudomonas palustris (strain HaA2)</name>
    <dbReference type="NCBI Taxonomy" id="316058"/>
    <lineage>
        <taxon>Bacteria</taxon>
        <taxon>Pseudomonadati</taxon>
        <taxon>Pseudomonadota</taxon>
        <taxon>Alphaproteobacteria</taxon>
        <taxon>Hyphomicrobiales</taxon>
        <taxon>Nitrobacteraceae</taxon>
        <taxon>Rhodopseudomonas</taxon>
    </lineage>
</organism>
<sequence length="988" mass="108893">MSSSAIDADISPASLAARFAAGPQLHAPDEAEKRCADWLADVPAELAAPIRAVADRCPNLRIALQSIAEASPYLFDLIRADPARLLRLLRSEPETGFRALLDATAAAVATASDEAEVMAVLRRMKAEAALSIALCDIGGLWPVLQVTQALTDLAVQSVQMTLRFLLRQEAARGRIHPPNPDAPEERSGLIVLAMGKMGAGELNYSSDIDLIVFYELDAPTLAPDIEPQPFFVRVTQGLSRILQQRRHDGYVFRVDLRLRPDPASTPVALSTASALNYYEREGRTWERAAMIKARACAGDVVAGEALLSEIAPFVWRKHLDFAALSDVHDMKRQMQTFRGQTEVAVEGHNVKVGRGGIREIEFFAQTQQLIAGGRHPELRVRPTLAALDILANRDWITFQARDELSAAYQFLRRVEHRIQMIADEQTHTLPDSIEAVERFSRFFGYASREAFARDLLAHLDCVQGHYSKLFEGDPTGTAKLPIDYAGGAEDTVLLDHLRALGYKKPLMVATTLQQWMAGGYRILKVEATQRAFNDFVPALIEELARAEEPDNAVNAFDRLLQALHRGGRLISLLSQNRDLLTLIALVLGAAPRLGDMLARQPQIMDGLIDPRFFGAMPDRTELSARLAATLSDAGSYEEFLDRLRLFGQESLFLIGTRILSGTVSTQQASIAFADVAEGIVGTVHDLVSKQFVSQYGRIKDQETAILAMGKLGSREMTAASDLDLILIYDFDHEQPDSDGERSLHGAQYFARFTQRLISAFTTRTNYGVLYDVDMRLRPSGRAGPLASRLDSFAEYQEVEAWTWEHLALTRARVISASPEFRARIEQVIRAVLTRPRDAAIANDVAEMRAAIAQEKGEGDVWDLKYAAGGMVDIDFIAQYLQLVHAATMPDILAVGTLSAIDNAARLGVLAQPDADVLRPAARLYHDLTQILRLCVSDKFKPETAGDDLLRVLVRAGDAPDFSSLQARVKETQAEVRAIFNRLIGGNGE</sequence>
<proteinExistence type="inferred from homology"/>
<reference key="1">
    <citation type="submission" date="2006-01" db="EMBL/GenBank/DDBJ databases">
        <title>Complete sequence of Rhodopseudomonas palustris HaA2.</title>
        <authorList>
            <consortium name="US DOE Joint Genome Institute"/>
            <person name="Copeland A."/>
            <person name="Lucas S."/>
            <person name="Lapidus A."/>
            <person name="Barry K."/>
            <person name="Detter J.C."/>
            <person name="Glavina T."/>
            <person name="Hammon N."/>
            <person name="Israni S."/>
            <person name="Pitluck S."/>
            <person name="Chain P."/>
            <person name="Malfatti S."/>
            <person name="Shin M."/>
            <person name="Vergez L."/>
            <person name="Schmutz J."/>
            <person name="Larimer F."/>
            <person name="Land M."/>
            <person name="Hauser L."/>
            <person name="Pelletier D.A."/>
            <person name="Kyrpides N."/>
            <person name="Anderson I."/>
            <person name="Oda Y."/>
            <person name="Harwood C.S."/>
            <person name="Richardson P."/>
        </authorList>
    </citation>
    <scope>NUCLEOTIDE SEQUENCE [LARGE SCALE GENOMIC DNA]</scope>
    <source>
        <strain>HaA2</strain>
    </source>
</reference>
<gene>
    <name evidence="1" type="primary">glnE</name>
    <name type="ordered locus">RPB_3440</name>
</gene>
<comment type="function">
    <text evidence="1">Involved in the regulation of glutamine synthetase GlnA, a key enzyme in the process to assimilate ammonia. When cellular nitrogen levels are high, the C-terminal adenylyl transferase (AT) inactivates GlnA by covalent transfer of an adenylyl group from ATP to specific tyrosine residue of GlnA, thus reducing its activity. Conversely, when nitrogen levels are low, the N-terminal adenylyl removase (AR) activates GlnA by removing the adenylyl group by phosphorolysis, increasing its activity. The regulatory region of GlnE binds the signal transduction protein PII (GlnB) which indicates the nitrogen status of the cell.</text>
</comment>
<comment type="catalytic activity">
    <reaction evidence="1">
        <text>[glutamine synthetase]-O(4)-(5'-adenylyl)-L-tyrosine + phosphate = [glutamine synthetase]-L-tyrosine + ADP</text>
        <dbReference type="Rhea" id="RHEA:43716"/>
        <dbReference type="Rhea" id="RHEA-COMP:10660"/>
        <dbReference type="Rhea" id="RHEA-COMP:10661"/>
        <dbReference type="ChEBI" id="CHEBI:43474"/>
        <dbReference type="ChEBI" id="CHEBI:46858"/>
        <dbReference type="ChEBI" id="CHEBI:83624"/>
        <dbReference type="ChEBI" id="CHEBI:456216"/>
        <dbReference type="EC" id="2.7.7.89"/>
    </reaction>
</comment>
<comment type="catalytic activity">
    <reaction evidence="1">
        <text>[glutamine synthetase]-L-tyrosine + ATP = [glutamine synthetase]-O(4)-(5'-adenylyl)-L-tyrosine + diphosphate</text>
        <dbReference type="Rhea" id="RHEA:18589"/>
        <dbReference type="Rhea" id="RHEA-COMP:10660"/>
        <dbReference type="Rhea" id="RHEA-COMP:10661"/>
        <dbReference type="ChEBI" id="CHEBI:30616"/>
        <dbReference type="ChEBI" id="CHEBI:33019"/>
        <dbReference type="ChEBI" id="CHEBI:46858"/>
        <dbReference type="ChEBI" id="CHEBI:83624"/>
        <dbReference type="EC" id="2.7.7.42"/>
    </reaction>
</comment>
<comment type="cofactor">
    <cofactor evidence="1">
        <name>Mg(2+)</name>
        <dbReference type="ChEBI" id="CHEBI:18420"/>
    </cofactor>
</comment>
<comment type="similarity">
    <text evidence="1">Belongs to the GlnE family.</text>
</comment>
<keyword id="KW-0067">ATP-binding</keyword>
<keyword id="KW-0460">Magnesium</keyword>
<keyword id="KW-0511">Multifunctional enzyme</keyword>
<keyword id="KW-0547">Nucleotide-binding</keyword>
<keyword id="KW-0548">Nucleotidyltransferase</keyword>
<keyword id="KW-1185">Reference proteome</keyword>
<keyword id="KW-0808">Transferase</keyword>
<feature type="chain" id="PRO_1000212987" description="Bifunctional glutamine synthetase adenylyltransferase/adenylyl-removing enzyme">
    <location>
        <begin position="1"/>
        <end position="988"/>
    </location>
</feature>
<feature type="region of interest" description="Adenylyl removase" evidence="1">
    <location>
        <begin position="1"/>
        <end position="474"/>
    </location>
</feature>
<feature type="region of interest" description="Adenylyl transferase" evidence="1">
    <location>
        <begin position="480"/>
        <end position="988"/>
    </location>
</feature>
<name>GLNE_RHOP2</name>